<name>VAP_FMVD</name>
<reference key="1">
    <citation type="journal article" date="1987" name="Nucleic Acids Res.">
        <title>Sequence of figwort mosaic virus DNA (caulimovirus group).</title>
        <authorList>
            <person name="Richins R.D."/>
            <person name="Scholthof H.B."/>
            <person name="Shepherd R.J."/>
        </authorList>
    </citation>
    <scope>NUCLEOTIDE SEQUENCE [GENOMIC DNA]</scope>
</reference>
<organismHost>
    <name type="scientific">Scrophularia californica</name>
    <name type="common">California bee plant</name>
    <dbReference type="NCBI Taxonomy" id="46031"/>
</organismHost>
<feature type="chain" id="PRO_0000222082" description="Virion-associated protein">
    <location>
        <begin position="1"/>
        <end position="115"/>
    </location>
</feature>
<feature type="region of interest" description="Disordered" evidence="3">
    <location>
        <begin position="96"/>
        <end position="115"/>
    </location>
</feature>
<feature type="coiled-coil region" evidence="2">
    <location>
        <begin position="1"/>
        <end position="28"/>
    </location>
</feature>
<feature type="coiled-coil region" evidence="1">
    <location>
        <begin position="33"/>
        <end position="54"/>
    </location>
</feature>
<feature type="compositionally biased region" description="Polar residues" evidence="3">
    <location>
        <begin position="96"/>
        <end position="106"/>
    </location>
</feature>
<feature type="disulfide bond" description="Interchain (with C-57 in multimeric partner 1)" evidence="1">
    <location>
        <position position="55"/>
    </location>
</feature>
<feature type="disulfide bond" description="Interchain (with C-55 in multimeric partner 2)" evidence="1">
    <location>
        <position position="57"/>
    </location>
</feature>
<sequence length="115" mass="12675">MAATLSEIRELIQSLTKTANEIKAMLERNSAGKPTGIEEAAAKIIKDIGDKIDQCECTKKIEEMLDQKQNADTQIVPTKQESSGLVKYSYPNWNVGNEELGSSGNPNAVKWPPRK</sequence>
<keyword id="KW-0175">Coiled coil</keyword>
<keyword id="KW-1015">Disulfide bond</keyword>
<keyword id="KW-1031">Host cell junction</keyword>
<keyword id="KW-1185">Reference proteome</keyword>
<keyword id="KW-0946">Virion</keyword>
<evidence type="ECO:0000250" key="1"/>
<evidence type="ECO:0000255" key="2"/>
<evidence type="ECO:0000256" key="3">
    <source>
        <dbReference type="SAM" id="MobiDB-lite"/>
    </source>
</evidence>
<evidence type="ECO:0000305" key="4"/>
<gene>
    <name type="ORF">ORF III</name>
</gene>
<proteinExistence type="inferred from homology"/>
<dbReference type="EMBL" id="X06166">
    <property type="protein sequence ID" value="CAA29525.1"/>
    <property type="molecule type" value="Genomic_DNA"/>
</dbReference>
<dbReference type="PIR" id="S01281">
    <property type="entry name" value="S01281"/>
</dbReference>
<dbReference type="RefSeq" id="NP_619546.1">
    <property type="nucleotide sequence ID" value="NC_003554.1"/>
</dbReference>
<dbReference type="SMR" id="P09522"/>
<dbReference type="KEGG" id="vg:940159"/>
<dbReference type="Proteomes" id="UP000008622">
    <property type="component" value="Segment"/>
</dbReference>
<dbReference type="GO" id="GO:0044219">
    <property type="term" value="C:host cell plasmodesma"/>
    <property type="evidence" value="ECO:0007669"/>
    <property type="project" value="UniProtKB-SubCell"/>
</dbReference>
<dbReference type="GO" id="GO:0044423">
    <property type="term" value="C:virion component"/>
    <property type="evidence" value="ECO:0007669"/>
    <property type="project" value="UniProtKB-KW"/>
</dbReference>
<dbReference type="GO" id="GO:0003677">
    <property type="term" value="F:DNA binding"/>
    <property type="evidence" value="ECO:0007669"/>
    <property type="project" value="InterPro"/>
</dbReference>
<dbReference type="Gene3D" id="6.10.250.630">
    <property type="match status" value="1"/>
</dbReference>
<dbReference type="InterPro" id="IPR004986">
    <property type="entry name" value="Caulimo_virion-assoc"/>
</dbReference>
<dbReference type="Pfam" id="PF03310">
    <property type="entry name" value="Cauli_DNA-bind"/>
    <property type="match status" value="1"/>
</dbReference>
<accession>P09522</accession>
<organism>
    <name type="scientific">Figwort mosaic virus (strain DxS)</name>
    <name type="common">FMV</name>
    <dbReference type="NCBI Taxonomy" id="10650"/>
    <lineage>
        <taxon>Viruses</taxon>
        <taxon>Riboviria</taxon>
        <taxon>Pararnavirae</taxon>
        <taxon>Artverviricota</taxon>
        <taxon>Revtraviricetes</taxon>
        <taxon>Ortervirales</taxon>
        <taxon>Caulimoviridae</taxon>
        <taxon>Caulimovirus</taxon>
        <taxon>Caulimovirus tesselloscrophulariae</taxon>
    </lineage>
</organism>
<protein>
    <recommendedName>
        <fullName>Virion-associated protein</fullName>
        <shortName>Vap</shortName>
    </recommendedName>
    <alternativeName>
        <fullName>Protein 3</fullName>
        <shortName>P3</shortName>
    </alternativeName>
</protein>
<comment type="function">
    <text evidence="1">Plays a role in virus cell-to-cell and plant-to-plant transmission. Interacts with virion icosahedral capsid and movement protein, thereby facilitating virion cell-to-cell transmission through plasmodesmata opened by viral movement protein. Also interacts with aphid transmission factor, attaching the virion to aphid stylet when the animal feeds on an virus infected plant. Aphid saliva may later detach the virion, inducing release of infectious particles when the animal feeds on a new plant (By similarity).</text>
</comment>
<comment type="subunit">
    <text evidence="1">Homotetramer, through coiled-coil domain. Homotrimer when interacts with icosehadral capsid. Interacts with capsid protein, and with Movement protein (By similarity).</text>
</comment>
<comment type="subcellular location">
    <subcellularLocation>
        <location evidence="1">Virion</location>
    </subcellularLocation>
    <subcellularLocation>
        <location>Host cell junction</location>
        <location>Host plasmodesma</location>
    </subcellularLocation>
</comment>
<comment type="similarity">
    <text evidence="4">Belongs to the caulimovirus ORF III family.</text>
</comment>